<gene>
    <name evidence="1" type="primary">rplX</name>
    <name type="ordered locus">Franean1_6038</name>
</gene>
<feature type="chain" id="PRO_0000355682" description="Large ribosomal subunit protein uL24">
    <location>
        <begin position="1"/>
        <end position="108"/>
    </location>
</feature>
<feature type="region of interest" description="Disordered" evidence="2">
    <location>
        <begin position="46"/>
        <end position="65"/>
    </location>
</feature>
<feature type="compositionally biased region" description="Low complexity" evidence="2">
    <location>
        <begin position="51"/>
        <end position="61"/>
    </location>
</feature>
<evidence type="ECO:0000255" key="1">
    <source>
        <dbReference type="HAMAP-Rule" id="MF_01326"/>
    </source>
</evidence>
<evidence type="ECO:0000256" key="2">
    <source>
        <dbReference type="SAM" id="MobiDB-lite"/>
    </source>
</evidence>
<evidence type="ECO:0000305" key="3"/>
<accession>A8LC45</accession>
<keyword id="KW-0687">Ribonucleoprotein</keyword>
<keyword id="KW-0689">Ribosomal protein</keyword>
<keyword id="KW-0694">RNA-binding</keyword>
<keyword id="KW-0699">rRNA-binding</keyword>
<reference key="1">
    <citation type="journal article" date="2007" name="Genome Res.">
        <title>Genome characteristics of facultatively symbiotic Frankia sp. strains reflect host range and host plant biogeography.</title>
        <authorList>
            <person name="Normand P."/>
            <person name="Lapierre P."/>
            <person name="Tisa L.S."/>
            <person name="Gogarten J.P."/>
            <person name="Alloisio N."/>
            <person name="Bagnarol E."/>
            <person name="Bassi C.A."/>
            <person name="Berry A.M."/>
            <person name="Bickhart D.M."/>
            <person name="Choisne N."/>
            <person name="Couloux A."/>
            <person name="Cournoyer B."/>
            <person name="Cruveiller S."/>
            <person name="Daubin V."/>
            <person name="Demange N."/>
            <person name="Francino M.P."/>
            <person name="Goltsman E."/>
            <person name="Huang Y."/>
            <person name="Kopp O.R."/>
            <person name="Labarre L."/>
            <person name="Lapidus A."/>
            <person name="Lavire C."/>
            <person name="Marechal J."/>
            <person name="Martinez M."/>
            <person name="Mastronunzio J.E."/>
            <person name="Mullin B.C."/>
            <person name="Niemann J."/>
            <person name="Pujic P."/>
            <person name="Rawnsley T."/>
            <person name="Rouy Z."/>
            <person name="Schenowitz C."/>
            <person name="Sellstedt A."/>
            <person name="Tavares F."/>
            <person name="Tomkins J.P."/>
            <person name="Vallenet D."/>
            <person name="Valverde C."/>
            <person name="Wall L.G."/>
            <person name="Wang Y."/>
            <person name="Medigue C."/>
            <person name="Benson D.R."/>
        </authorList>
    </citation>
    <scope>NUCLEOTIDE SEQUENCE [LARGE SCALE GENOMIC DNA]</scope>
    <source>
        <strain>EAN1pec</strain>
    </source>
</reference>
<dbReference type="EMBL" id="CP000820">
    <property type="protein sequence ID" value="ABW15382.1"/>
    <property type="molecule type" value="Genomic_DNA"/>
</dbReference>
<dbReference type="SMR" id="A8LC45"/>
<dbReference type="STRING" id="298653.Franean1_6038"/>
<dbReference type="KEGG" id="fre:Franean1_6038"/>
<dbReference type="eggNOG" id="COG0198">
    <property type="taxonomic scope" value="Bacteria"/>
</dbReference>
<dbReference type="HOGENOM" id="CLU_093315_2_0_11"/>
<dbReference type="GO" id="GO:1990904">
    <property type="term" value="C:ribonucleoprotein complex"/>
    <property type="evidence" value="ECO:0007669"/>
    <property type="project" value="UniProtKB-KW"/>
</dbReference>
<dbReference type="GO" id="GO:0005840">
    <property type="term" value="C:ribosome"/>
    <property type="evidence" value="ECO:0007669"/>
    <property type="project" value="UniProtKB-KW"/>
</dbReference>
<dbReference type="GO" id="GO:0019843">
    <property type="term" value="F:rRNA binding"/>
    <property type="evidence" value="ECO:0007669"/>
    <property type="project" value="UniProtKB-UniRule"/>
</dbReference>
<dbReference type="GO" id="GO:0003735">
    <property type="term" value="F:structural constituent of ribosome"/>
    <property type="evidence" value="ECO:0007669"/>
    <property type="project" value="InterPro"/>
</dbReference>
<dbReference type="GO" id="GO:0006412">
    <property type="term" value="P:translation"/>
    <property type="evidence" value="ECO:0007669"/>
    <property type="project" value="UniProtKB-UniRule"/>
</dbReference>
<dbReference type="CDD" id="cd06089">
    <property type="entry name" value="KOW_RPL26"/>
    <property type="match status" value="1"/>
</dbReference>
<dbReference type="FunFam" id="2.30.30.30:FF:000004">
    <property type="entry name" value="50S ribosomal protein L24"/>
    <property type="match status" value="1"/>
</dbReference>
<dbReference type="Gene3D" id="2.30.30.30">
    <property type="match status" value="1"/>
</dbReference>
<dbReference type="HAMAP" id="MF_01326_B">
    <property type="entry name" value="Ribosomal_uL24_B"/>
    <property type="match status" value="1"/>
</dbReference>
<dbReference type="InterPro" id="IPR005824">
    <property type="entry name" value="KOW"/>
</dbReference>
<dbReference type="InterPro" id="IPR014722">
    <property type="entry name" value="Rib_uL2_dom2"/>
</dbReference>
<dbReference type="InterPro" id="IPR003256">
    <property type="entry name" value="Ribosomal_uL24"/>
</dbReference>
<dbReference type="InterPro" id="IPR005825">
    <property type="entry name" value="Ribosomal_uL24_CS"/>
</dbReference>
<dbReference type="InterPro" id="IPR041988">
    <property type="entry name" value="Ribosomal_uL24_KOW"/>
</dbReference>
<dbReference type="InterPro" id="IPR008991">
    <property type="entry name" value="Translation_prot_SH3-like_sf"/>
</dbReference>
<dbReference type="NCBIfam" id="TIGR01079">
    <property type="entry name" value="rplX_bact"/>
    <property type="match status" value="1"/>
</dbReference>
<dbReference type="PANTHER" id="PTHR12903">
    <property type="entry name" value="MITOCHONDRIAL RIBOSOMAL PROTEIN L24"/>
    <property type="match status" value="1"/>
</dbReference>
<dbReference type="Pfam" id="PF00467">
    <property type="entry name" value="KOW"/>
    <property type="match status" value="1"/>
</dbReference>
<dbReference type="Pfam" id="PF17136">
    <property type="entry name" value="ribosomal_L24"/>
    <property type="match status" value="1"/>
</dbReference>
<dbReference type="SMART" id="SM00739">
    <property type="entry name" value="KOW"/>
    <property type="match status" value="1"/>
</dbReference>
<dbReference type="SUPFAM" id="SSF50104">
    <property type="entry name" value="Translation proteins SH3-like domain"/>
    <property type="match status" value="1"/>
</dbReference>
<dbReference type="PROSITE" id="PS01108">
    <property type="entry name" value="RIBOSOMAL_L24"/>
    <property type="match status" value="1"/>
</dbReference>
<comment type="function">
    <text evidence="1">One of two assembly initiator proteins, it binds directly to the 5'-end of the 23S rRNA, where it nucleates assembly of the 50S subunit.</text>
</comment>
<comment type="function">
    <text evidence="1">One of the proteins that surrounds the polypeptide exit tunnel on the outside of the subunit.</text>
</comment>
<comment type="subunit">
    <text evidence="1">Part of the 50S ribosomal subunit.</text>
</comment>
<comment type="similarity">
    <text evidence="1">Belongs to the universal ribosomal protein uL24 family.</text>
</comment>
<name>RL24_PARS2</name>
<protein>
    <recommendedName>
        <fullName evidence="1">Large ribosomal subunit protein uL24</fullName>
    </recommendedName>
    <alternativeName>
        <fullName evidence="3">50S ribosomal protein L24</fullName>
    </alternativeName>
</protein>
<proteinExistence type="inferred from homology"/>
<organism>
    <name type="scientific">Parafrankia sp. (strain EAN1pec)</name>
    <dbReference type="NCBI Taxonomy" id="298653"/>
    <lineage>
        <taxon>Bacteria</taxon>
        <taxon>Bacillati</taxon>
        <taxon>Actinomycetota</taxon>
        <taxon>Actinomycetes</taxon>
        <taxon>Frankiales</taxon>
        <taxon>Frankiaceae</taxon>
        <taxon>Parafrankia</taxon>
    </lineage>
</organism>
<sequence>MAGMKIKKGDTVQIVTGKDRGLKGKVIRAIPDQNKVVVEGANRVTRHTRVQQSSRGSQSGGIVTQEAPIHVSNVMIVDPSDGRPTRVGYRFNDDGTKVRISRRTGAEL</sequence>